<accession>B6EK51</accession>
<gene>
    <name evidence="1" type="primary">dxr</name>
    <name type="ordered locus">VSAL_I2421</name>
</gene>
<dbReference type="EC" id="1.1.1.267" evidence="1"/>
<dbReference type="EMBL" id="FM178379">
    <property type="protein sequence ID" value="CAQ80105.1"/>
    <property type="molecule type" value="Genomic_DNA"/>
</dbReference>
<dbReference type="SMR" id="B6EK51"/>
<dbReference type="KEGG" id="vsa:VSAL_I2421"/>
<dbReference type="eggNOG" id="COG0743">
    <property type="taxonomic scope" value="Bacteria"/>
</dbReference>
<dbReference type="HOGENOM" id="CLU_035714_4_0_6"/>
<dbReference type="UniPathway" id="UPA00056">
    <property type="reaction ID" value="UER00092"/>
</dbReference>
<dbReference type="Proteomes" id="UP000001730">
    <property type="component" value="Chromosome 1"/>
</dbReference>
<dbReference type="GO" id="GO:0030604">
    <property type="term" value="F:1-deoxy-D-xylulose-5-phosphate reductoisomerase activity"/>
    <property type="evidence" value="ECO:0007669"/>
    <property type="project" value="UniProtKB-UniRule"/>
</dbReference>
<dbReference type="GO" id="GO:0030145">
    <property type="term" value="F:manganese ion binding"/>
    <property type="evidence" value="ECO:0007669"/>
    <property type="project" value="TreeGrafter"/>
</dbReference>
<dbReference type="GO" id="GO:0070402">
    <property type="term" value="F:NADPH binding"/>
    <property type="evidence" value="ECO:0007669"/>
    <property type="project" value="InterPro"/>
</dbReference>
<dbReference type="GO" id="GO:0051484">
    <property type="term" value="P:isopentenyl diphosphate biosynthetic process, methylerythritol 4-phosphate pathway involved in terpenoid biosynthetic process"/>
    <property type="evidence" value="ECO:0007669"/>
    <property type="project" value="TreeGrafter"/>
</dbReference>
<dbReference type="FunFam" id="1.10.1740.10:FF:000004">
    <property type="entry name" value="1-deoxy-D-xylulose 5-phosphate reductoisomerase"/>
    <property type="match status" value="1"/>
</dbReference>
<dbReference type="FunFam" id="3.40.50.720:FF:000045">
    <property type="entry name" value="1-deoxy-D-xylulose 5-phosphate reductoisomerase"/>
    <property type="match status" value="1"/>
</dbReference>
<dbReference type="Gene3D" id="1.10.1740.10">
    <property type="match status" value="1"/>
</dbReference>
<dbReference type="Gene3D" id="3.40.50.720">
    <property type="entry name" value="NAD(P)-binding Rossmann-like Domain"/>
    <property type="match status" value="1"/>
</dbReference>
<dbReference type="HAMAP" id="MF_00183">
    <property type="entry name" value="DXP_reductoisom"/>
    <property type="match status" value="1"/>
</dbReference>
<dbReference type="InterPro" id="IPR003821">
    <property type="entry name" value="DXP_reductoisomerase"/>
</dbReference>
<dbReference type="InterPro" id="IPR013644">
    <property type="entry name" value="DXP_reductoisomerase_C"/>
</dbReference>
<dbReference type="InterPro" id="IPR013512">
    <property type="entry name" value="DXP_reductoisomerase_N"/>
</dbReference>
<dbReference type="InterPro" id="IPR026877">
    <property type="entry name" value="DXPR_C"/>
</dbReference>
<dbReference type="InterPro" id="IPR036169">
    <property type="entry name" value="DXPR_C_sf"/>
</dbReference>
<dbReference type="InterPro" id="IPR036291">
    <property type="entry name" value="NAD(P)-bd_dom_sf"/>
</dbReference>
<dbReference type="NCBIfam" id="TIGR00243">
    <property type="entry name" value="Dxr"/>
    <property type="match status" value="1"/>
</dbReference>
<dbReference type="NCBIfam" id="NF003938">
    <property type="entry name" value="PRK05447.1-1"/>
    <property type="match status" value="1"/>
</dbReference>
<dbReference type="NCBIfam" id="NF009114">
    <property type="entry name" value="PRK12464.1"/>
    <property type="match status" value="1"/>
</dbReference>
<dbReference type="PANTHER" id="PTHR30525">
    <property type="entry name" value="1-DEOXY-D-XYLULOSE 5-PHOSPHATE REDUCTOISOMERASE"/>
    <property type="match status" value="1"/>
</dbReference>
<dbReference type="PANTHER" id="PTHR30525:SF0">
    <property type="entry name" value="1-DEOXY-D-XYLULOSE 5-PHOSPHATE REDUCTOISOMERASE, CHLOROPLASTIC"/>
    <property type="match status" value="1"/>
</dbReference>
<dbReference type="Pfam" id="PF08436">
    <property type="entry name" value="DXP_redisom_C"/>
    <property type="match status" value="1"/>
</dbReference>
<dbReference type="Pfam" id="PF02670">
    <property type="entry name" value="DXP_reductoisom"/>
    <property type="match status" value="1"/>
</dbReference>
<dbReference type="Pfam" id="PF13288">
    <property type="entry name" value="DXPR_C"/>
    <property type="match status" value="1"/>
</dbReference>
<dbReference type="PIRSF" id="PIRSF006205">
    <property type="entry name" value="Dxp_reductismrs"/>
    <property type="match status" value="1"/>
</dbReference>
<dbReference type="SUPFAM" id="SSF69055">
    <property type="entry name" value="1-deoxy-D-xylulose-5-phosphate reductoisomerase, C-terminal domain"/>
    <property type="match status" value="1"/>
</dbReference>
<dbReference type="SUPFAM" id="SSF55347">
    <property type="entry name" value="Glyceraldehyde-3-phosphate dehydrogenase-like, C-terminal domain"/>
    <property type="match status" value="1"/>
</dbReference>
<dbReference type="SUPFAM" id="SSF51735">
    <property type="entry name" value="NAD(P)-binding Rossmann-fold domains"/>
    <property type="match status" value="1"/>
</dbReference>
<organism>
    <name type="scientific">Aliivibrio salmonicida (strain LFI1238)</name>
    <name type="common">Vibrio salmonicida (strain LFI1238)</name>
    <dbReference type="NCBI Taxonomy" id="316275"/>
    <lineage>
        <taxon>Bacteria</taxon>
        <taxon>Pseudomonadati</taxon>
        <taxon>Pseudomonadota</taxon>
        <taxon>Gammaproteobacteria</taxon>
        <taxon>Vibrionales</taxon>
        <taxon>Vibrionaceae</taxon>
        <taxon>Aliivibrio</taxon>
    </lineage>
</organism>
<protein>
    <recommendedName>
        <fullName evidence="1">1-deoxy-D-xylulose 5-phosphate reductoisomerase</fullName>
        <shortName evidence="1">DXP reductoisomerase</shortName>
        <ecNumber evidence="1">1.1.1.267</ecNumber>
    </recommendedName>
    <alternativeName>
        <fullName evidence="1">1-deoxyxylulose-5-phosphate reductoisomerase</fullName>
    </alternativeName>
    <alternativeName>
        <fullName evidence="1">2-C-methyl-D-erythritol 4-phosphate synthase</fullName>
    </alternativeName>
</protein>
<reference key="1">
    <citation type="journal article" date="2008" name="BMC Genomics">
        <title>The genome sequence of the fish pathogen Aliivibrio salmonicida strain LFI1238 shows extensive evidence of gene decay.</title>
        <authorList>
            <person name="Hjerde E."/>
            <person name="Lorentzen M.S."/>
            <person name="Holden M.T."/>
            <person name="Seeger K."/>
            <person name="Paulsen S."/>
            <person name="Bason N."/>
            <person name="Churcher C."/>
            <person name="Harris D."/>
            <person name="Norbertczak H."/>
            <person name="Quail M.A."/>
            <person name="Sanders S."/>
            <person name="Thurston S."/>
            <person name="Parkhill J."/>
            <person name="Willassen N.P."/>
            <person name="Thomson N.R."/>
        </authorList>
    </citation>
    <scope>NUCLEOTIDE SEQUENCE [LARGE SCALE GENOMIC DNA]</scope>
    <source>
        <strain>LFI1238</strain>
    </source>
</reference>
<keyword id="KW-0414">Isoprene biosynthesis</keyword>
<keyword id="KW-0464">Manganese</keyword>
<keyword id="KW-0479">Metal-binding</keyword>
<keyword id="KW-0521">NADP</keyword>
<keyword id="KW-0560">Oxidoreductase</keyword>
<comment type="function">
    <text evidence="1">Catalyzes the NADPH-dependent rearrangement and reduction of 1-deoxy-D-xylulose-5-phosphate (DXP) to 2-C-methyl-D-erythritol 4-phosphate (MEP).</text>
</comment>
<comment type="catalytic activity">
    <reaction evidence="1">
        <text>2-C-methyl-D-erythritol 4-phosphate + NADP(+) = 1-deoxy-D-xylulose 5-phosphate + NADPH + H(+)</text>
        <dbReference type="Rhea" id="RHEA:13717"/>
        <dbReference type="ChEBI" id="CHEBI:15378"/>
        <dbReference type="ChEBI" id="CHEBI:57783"/>
        <dbReference type="ChEBI" id="CHEBI:57792"/>
        <dbReference type="ChEBI" id="CHEBI:58262"/>
        <dbReference type="ChEBI" id="CHEBI:58349"/>
        <dbReference type="EC" id="1.1.1.267"/>
    </reaction>
    <physiologicalReaction direction="right-to-left" evidence="1">
        <dbReference type="Rhea" id="RHEA:13719"/>
    </physiologicalReaction>
</comment>
<comment type="cofactor">
    <cofactor evidence="1">
        <name>Mg(2+)</name>
        <dbReference type="ChEBI" id="CHEBI:18420"/>
    </cofactor>
    <cofactor evidence="1">
        <name>Mn(2+)</name>
        <dbReference type="ChEBI" id="CHEBI:29035"/>
    </cofactor>
</comment>
<comment type="pathway">
    <text evidence="1">Isoprenoid biosynthesis; isopentenyl diphosphate biosynthesis via DXP pathway; isopentenyl diphosphate from 1-deoxy-D-xylulose 5-phosphate: step 1/6.</text>
</comment>
<comment type="similarity">
    <text evidence="1">Belongs to the DXR family.</text>
</comment>
<sequence length="400" mass="43600">MRKLTVLGATGSIGSSTLSVAKQNSHQFEIVALGAGSNVQKMFELCCEWQPKYAAMADPISALALQRQLKSNSIRTDVFSGEEGLCHIAQLDEVDTVMAAIVGAAGLLPTMSAVKAGKRILLANKEALVMSGQLFIDAVEKYGAELLPVDSEHNAIFQCLPESIQRKLGRCDLDAHGVSSILLTGSGGPFRYTDISELVSVTPEMAIAHPNWSMGPKISVDSATMMNKGLEYIEARWLFNTTKEQLKVIIHPQSVIHSMVQYKDGSVLAQMGLPDMRTPIACTMSYPERISSGVEPLDFTKIGELSFLEPDYSRYPCLKLAIDACYSGQHATTGLNAANEQSVAAFLNNEIGFTDITRINEQVLNKVCANFQNLELDSLESLIDLDRMARNYADEALKKV</sequence>
<name>DXR_ALISL</name>
<evidence type="ECO:0000255" key="1">
    <source>
        <dbReference type="HAMAP-Rule" id="MF_00183"/>
    </source>
</evidence>
<proteinExistence type="inferred from homology"/>
<feature type="chain" id="PRO_1000098472" description="1-deoxy-D-xylulose 5-phosphate reductoisomerase">
    <location>
        <begin position="1"/>
        <end position="400"/>
    </location>
</feature>
<feature type="binding site" evidence="1">
    <location>
        <position position="10"/>
    </location>
    <ligand>
        <name>NADPH</name>
        <dbReference type="ChEBI" id="CHEBI:57783"/>
    </ligand>
</feature>
<feature type="binding site" evidence="1">
    <location>
        <position position="11"/>
    </location>
    <ligand>
        <name>NADPH</name>
        <dbReference type="ChEBI" id="CHEBI:57783"/>
    </ligand>
</feature>
<feature type="binding site" evidence="1">
    <location>
        <position position="12"/>
    </location>
    <ligand>
        <name>NADPH</name>
        <dbReference type="ChEBI" id="CHEBI:57783"/>
    </ligand>
</feature>
<feature type="binding site" evidence="1">
    <location>
        <position position="13"/>
    </location>
    <ligand>
        <name>NADPH</name>
        <dbReference type="ChEBI" id="CHEBI:57783"/>
    </ligand>
</feature>
<feature type="binding site" evidence="1">
    <location>
        <position position="36"/>
    </location>
    <ligand>
        <name>NADPH</name>
        <dbReference type="ChEBI" id="CHEBI:57783"/>
    </ligand>
</feature>
<feature type="binding site" evidence="1">
    <location>
        <position position="38"/>
    </location>
    <ligand>
        <name>NADPH</name>
        <dbReference type="ChEBI" id="CHEBI:57783"/>
    </ligand>
</feature>
<feature type="binding site" evidence="1">
    <location>
        <position position="124"/>
    </location>
    <ligand>
        <name>NADPH</name>
        <dbReference type="ChEBI" id="CHEBI:57783"/>
    </ligand>
</feature>
<feature type="binding site" evidence="1">
    <location>
        <position position="125"/>
    </location>
    <ligand>
        <name>1-deoxy-D-xylulose 5-phosphate</name>
        <dbReference type="ChEBI" id="CHEBI:57792"/>
    </ligand>
</feature>
<feature type="binding site" evidence="1">
    <location>
        <position position="126"/>
    </location>
    <ligand>
        <name>NADPH</name>
        <dbReference type="ChEBI" id="CHEBI:57783"/>
    </ligand>
</feature>
<feature type="binding site" evidence="1">
    <location>
        <position position="150"/>
    </location>
    <ligand>
        <name>Mn(2+)</name>
        <dbReference type="ChEBI" id="CHEBI:29035"/>
    </ligand>
</feature>
<feature type="binding site" evidence="1">
    <location>
        <position position="151"/>
    </location>
    <ligand>
        <name>1-deoxy-D-xylulose 5-phosphate</name>
        <dbReference type="ChEBI" id="CHEBI:57792"/>
    </ligand>
</feature>
<feature type="binding site" evidence="1">
    <location>
        <position position="152"/>
    </location>
    <ligand>
        <name>1-deoxy-D-xylulose 5-phosphate</name>
        <dbReference type="ChEBI" id="CHEBI:57792"/>
    </ligand>
</feature>
<feature type="binding site" evidence="1">
    <location>
        <position position="152"/>
    </location>
    <ligand>
        <name>Mn(2+)</name>
        <dbReference type="ChEBI" id="CHEBI:29035"/>
    </ligand>
</feature>
<feature type="binding site" evidence="1">
    <location>
        <position position="186"/>
    </location>
    <ligand>
        <name>1-deoxy-D-xylulose 5-phosphate</name>
        <dbReference type="ChEBI" id="CHEBI:57792"/>
    </ligand>
</feature>
<feature type="binding site" evidence="1">
    <location>
        <position position="209"/>
    </location>
    <ligand>
        <name>1-deoxy-D-xylulose 5-phosphate</name>
        <dbReference type="ChEBI" id="CHEBI:57792"/>
    </ligand>
</feature>
<feature type="binding site" evidence="1">
    <location>
        <position position="215"/>
    </location>
    <ligand>
        <name>NADPH</name>
        <dbReference type="ChEBI" id="CHEBI:57783"/>
    </ligand>
</feature>
<feature type="binding site" evidence="1">
    <location>
        <position position="222"/>
    </location>
    <ligand>
        <name>1-deoxy-D-xylulose 5-phosphate</name>
        <dbReference type="ChEBI" id="CHEBI:57792"/>
    </ligand>
</feature>
<feature type="binding site" evidence="1">
    <location>
        <position position="227"/>
    </location>
    <ligand>
        <name>1-deoxy-D-xylulose 5-phosphate</name>
        <dbReference type="ChEBI" id="CHEBI:57792"/>
    </ligand>
</feature>
<feature type="binding site" evidence="1">
    <location>
        <position position="228"/>
    </location>
    <ligand>
        <name>1-deoxy-D-xylulose 5-phosphate</name>
        <dbReference type="ChEBI" id="CHEBI:57792"/>
    </ligand>
</feature>
<feature type="binding site" evidence="1">
    <location>
        <position position="231"/>
    </location>
    <ligand>
        <name>1-deoxy-D-xylulose 5-phosphate</name>
        <dbReference type="ChEBI" id="CHEBI:57792"/>
    </ligand>
</feature>
<feature type="binding site" evidence="1">
    <location>
        <position position="231"/>
    </location>
    <ligand>
        <name>Mn(2+)</name>
        <dbReference type="ChEBI" id="CHEBI:29035"/>
    </ligand>
</feature>